<sequence>MLNQNLTISQEIAAQPKTQYFTKEDGDALANLLESNPYKEQAVEVKSLLKSERLIESSRVEPEVDWFYCKLGLDSNYFDSTPSIVIARHILSLYAAKMVSHATGAKLEVHLHSKNEGSATFITPSNPGKRDSPAMMIEHAIESHYFGEGYHQDQQLLSPQQVAVAPFPVSPKPPTGTNLPPHGFRLACYRTTGTVSNSSPVHLRLYYLTKPVFPQATNDLSASKNDEILATETDLFKIGDISFIEKSSELTKKIYQEVMNEVVGKQGPVIKHYPYQTNGARLVIAYRRGSTHSYWSAIGELYHFHQMYATHKYVEQFSNGITIYSIYLRPLHPDVDINTKISKIAEQASLVYVLPRTSLTPLFLSHQLSFPEVTYAYVCWKFAYQFLNRYATEYSALAAAIGDDSTKQSMLAQLKTRLSKDTFTEGRVRDAVLQYPELIKILYQDFEKFHFSGSNSNNTQKYDVQHGSEILASIKKTVNNELDSQIFSAILSFNRHLLKTNFYKQTKTALSFRLDPGFLSTKEYVSTPYAVFFVVGSEFRGFHIRFRDISRGGIRIIRSGNSTQYDHNSSSLFDENYNLANTQQSKNKDIAEGGSKGTILLSADHQSKAEVAFHKYIDGLLDLLLPNHEIVDHFAKPEILFLGPDEGTADFMNWASSHAKDRGAHFWKAFTTGKSLSRGGIPHDLYGMTTRSIHQYVLGTLAKLGRNEADCTKFQTGGPDGDLGSNEIKISKDKTIGIVDGSGVLLDPQGLNRDEIGRLASKRQMARYFDKSKLSPQGFFVDVAENDVKLPNGDIVESGLIFRNNFHLNPLCNADIFVPCGGRPESVQLTNVDKMFTATGESRFPIIVEGANLFFTQKARLMIEEKGAIIFKDASANKGGVTSSSLEVLAALALNDEEFDRHMCVKDNVVPEFYENYIKDVHHTIESNARLEFECIWSEHESTKTPRSILSDLLSNKINSLNDSIQTSSLWTDQSLRRKIISAACPKVLLNLLGVDKIMERVPEPYVKAIFGSYLASRFVYKYGLNSNEFAFYTYMETLKQQ</sequence>
<gene>
    <name type="primary">glud2</name>
    <name type="ORF">DDB_G0280319</name>
</gene>
<reference key="1">
    <citation type="journal article" date="2005" name="Nature">
        <title>The genome of the social amoeba Dictyostelium discoideum.</title>
        <authorList>
            <person name="Eichinger L."/>
            <person name="Pachebat J.A."/>
            <person name="Gloeckner G."/>
            <person name="Rajandream M.A."/>
            <person name="Sucgang R."/>
            <person name="Berriman M."/>
            <person name="Song J."/>
            <person name="Olsen R."/>
            <person name="Szafranski K."/>
            <person name="Xu Q."/>
            <person name="Tunggal B."/>
            <person name="Kummerfeld S."/>
            <person name="Madera M."/>
            <person name="Konfortov B.A."/>
            <person name="Rivero F."/>
            <person name="Bankier A.T."/>
            <person name="Lehmann R."/>
            <person name="Hamlin N."/>
            <person name="Davies R."/>
            <person name="Gaudet P."/>
            <person name="Fey P."/>
            <person name="Pilcher K."/>
            <person name="Chen G."/>
            <person name="Saunders D."/>
            <person name="Sodergren E.J."/>
            <person name="Davis P."/>
            <person name="Kerhornou A."/>
            <person name="Nie X."/>
            <person name="Hall N."/>
            <person name="Anjard C."/>
            <person name="Hemphill L."/>
            <person name="Bason N."/>
            <person name="Farbrother P."/>
            <person name="Desany B."/>
            <person name="Just E."/>
            <person name="Morio T."/>
            <person name="Rost R."/>
            <person name="Churcher C.M."/>
            <person name="Cooper J."/>
            <person name="Haydock S."/>
            <person name="van Driessche N."/>
            <person name="Cronin A."/>
            <person name="Goodhead I."/>
            <person name="Muzny D.M."/>
            <person name="Mourier T."/>
            <person name="Pain A."/>
            <person name="Lu M."/>
            <person name="Harper D."/>
            <person name="Lindsay R."/>
            <person name="Hauser H."/>
            <person name="James K.D."/>
            <person name="Quiles M."/>
            <person name="Madan Babu M."/>
            <person name="Saito T."/>
            <person name="Buchrieser C."/>
            <person name="Wardroper A."/>
            <person name="Felder M."/>
            <person name="Thangavelu M."/>
            <person name="Johnson D."/>
            <person name="Knights A."/>
            <person name="Loulseged H."/>
            <person name="Mungall K.L."/>
            <person name="Oliver K."/>
            <person name="Price C."/>
            <person name="Quail M.A."/>
            <person name="Urushihara H."/>
            <person name="Hernandez J."/>
            <person name="Rabbinowitsch E."/>
            <person name="Steffen D."/>
            <person name="Sanders M."/>
            <person name="Ma J."/>
            <person name="Kohara Y."/>
            <person name="Sharp S."/>
            <person name="Simmonds M.N."/>
            <person name="Spiegler S."/>
            <person name="Tivey A."/>
            <person name="Sugano S."/>
            <person name="White B."/>
            <person name="Walker D."/>
            <person name="Woodward J.R."/>
            <person name="Winckler T."/>
            <person name="Tanaka Y."/>
            <person name="Shaulsky G."/>
            <person name="Schleicher M."/>
            <person name="Weinstock G.M."/>
            <person name="Rosenthal A."/>
            <person name="Cox E.C."/>
            <person name="Chisholm R.L."/>
            <person name="Gibbs R.A."/>
            <person name="Loomis W.F."/>
            <person name="Platzer M."/>
            <person name="Kay R.R."/>
            <person name="Williams J.G."/>
            <person name="Dear P.H."/>
            <person name="Noegel A.A."/>
            <person name="Barrell B.G."/>
            <person name="Kuspa A."/>
        </authorList>
    </citation>
    <scope>NUCLEOTIDE SEQUENCE [LARGE SCALE GENOMIC DNA]</scope>
    <source>
        <strain>AX4</strain>
    </source>
</reference>
<reference key="2">
    <citation type="submission" date="2009-07" db="UniProtKB">
        <authorList>
            <person name="Bienvenut W.V."/>
            <person name="Ura S."/>
            <person name="Insall R.H."/>
        </authorList>
    </citation>
    <scope>PROTEIN SEQUENCE OF 115-130; 191-204; 238-246; 254-265; 344-356; 428-440; 462-476; 514-522; 692-703; 790-803 AND 1009-1018</scope>
    <scope>IDENTIFICATION BY MASS SPECTROMETRY</scope>
    <source>
        <strain>AX2</strain>
    </source>
</reference>
<reference key="3">
    <citation type="journal article" date="1991" name="Arch. Biochem. Biophys.">
        <title>The NAD-dependent glutamate dehydrogenase from Dictyostelium discoideum: purification and properties.</title>
        <authorList>
            <person name="Pamula F."/>
            <person name="Wheldrake J.F."/>
        </authorList>
    </citation>
    <scope>CATALYTIC ACTIVITY</scope>
    <scope>ACTIVITY REGULATION</scope>
    <scope>BIOPHYSICOCHEMICAL PROPERTIES</scope>
</reference>
<reference key="4">
    <citation type="journal article" date="1992" name="J. Gen. Microbiol.">
        <title>The effect of AMP on the NAD-dependent glutamate dehydrogenase during activation and morphogenesis in the cellular slime moulds.</title>
        <authorList>
            <person name="Pamula F."/>
            <person name="Wheldrake J.F."/>
        </authorList>
    </citation>
    <scope>ACTIVITY REGULATION</scope>
</reference>
<reference key="5">
    <citation type="journal article" date="1996" name="Biochem. Mol. Biol. Int.">
        <title>Kinetic properties and the mechanism of activation of NAD-dependent glutamate dehydrogenase from Dictyostelium discoideum.</title>
        <authorList>
            <person name="Pamula F."/>
            <person name="Wheldrake J.F."/>
        </authorList>
    </citation>
    <scope>BIOPHYSICOCHEMICAL PROPERTIES</scope>
    <scope>ACTIVITY REGULATION</scope>
</reference>
<reference key="6">
    <citation type="journal article" date="2021" name="J. Biol. Chem.">
        <title>A Legionella effector ADP-ribosyltransferase inactivates glutamate dehydrogenase.</title>
        <authorList>
            <person name="Black M.H."/>
            <person name="Osinski A."/>
            <person name="Park G.J."/>
            <person name="Gradowski M."/>
            <person name="Servage K.A."/>
            <person name="Pawlowski K."/>
            <person name="Tagliabracci V.S."/>
        </authorList>
    </citation>
    <scope>CATALYTIC ACTIVITY</scope>
    <scope>ACTIVITY REGULATION (MICROBIAL INFECTION)</scope>
    <scope>BIOPHYSICOCHEMICAL PROPERTIES</scope>
    <scope>SUBUNIT</scope>
    <scope>ADP-RIBOSYLATION AT ARG-763 (MICROBIAL INFECTION)</scope>
    <scope>MUTAGENESIS OF ARG-763</scope>
</reference>
<evidence type="ECO:0000250" key="1"/>
<evidence type="ECO:0000269" key="2">
    <source>
    </source>
</evidence>
<evidence type="ECO:0000269" key="3">
    <source>
    </source>
</evidence>
<evidence type="ECO:0000269" key="4">
    <source>
    </source>
</evidence>
<evidence type="ECO:0000269" key="5">
    <source>
    </source>
</evidence>
<evidence type="ECO:0000305" key="6"/>
<proteinExistence type="evidence at protein level"/>
<keyword id="KW-0013">ADP-ribosylation</keyword>
<keyword id="KW-0963">Cytoplasm</keyword>
<keyword id="KW-0903">Direct protein sequencing</keyword>
<keyword id="KW-0520">NAD</keyword>
<keyword id="KW-0560">Oxidoreductase</keyword>
<keyword id="KW-1185">Reference proteome</keyword>
<feature type="chain" id="PRO_0000388369" description="Glutamate dehydrogenase 2">
    <location>
        <begin position="1"/>
        <end position="1042"/>
    </location>
</feature>
<feature type="active site" evidence="1">
    <location>
        <position position="596"/>
    </location>
</feature>
<feature type="modified residue" description="ADP-ribosylarginine; by Legionella Lart1" evidence="4">
    <location>
        <position position="763"/>
    </location>
</feature>
<feature type="mutagenesis site" description="Abolishes ADP-ribosylation by Lart1." evidence="4">
    <original>R</original>
    <variation>A</variation>
    <location>
        <position position="763"/>
    </location>
</feature>
<organism>
    <name type="scientific">Dictyostelium discoideum</name>
    <name type="common">Social amoeba</name>
    <dbReference type="NCBI Taxonomy" id="44689"/>
    <lineage>
        <taxon>Eukaryota</taxon>
        <taxon>Amoebozoa</taxon>
        <taxon>Evosea</taxon>
        <taxon>Eumycetozoa</taxon>
        <taxon>Dictyostelia</taxon>
        <taxon>Dictyosteliales</taxon>
        <taxon>Dictyosteliaceae</taxon>
        <taxon>Dictyostelium</taxon>
    </lineage>
</organism>
<dbReference type="EC" id="1.4.1.2" evidence="3 4"/>
<dbReference type="EMBL" id="AAFI02000035">
    <property type="protein sequence ID" value="EAL67386.2"/>
    <property type="molecule type" value="Genomic_DNA"/>
</dbReference>
<dbReference type="RefSeq" id="XP_641372.4">
    <property type="nucleotide sequence ID" value="XM_636280.3"/>
</dbReference>
<dbReference type="FunCoup" id="Q54VI3">
    <property type="interactions" value="179"/>
</dbReference>
<dbReference type="STRING" id="44689.Q54VI3"/>
<dbReference type="GlyGen" id="Q54VI3">
    <property type="glycosylation" value="1 site"/>
</dbReference>
<dbReference type="PaxDb" id="44689-DDB0233691"/>
<dbReference type="GeneID" id="8622506"/>
<dbReference type="KEGG" id="ddi:DDB_G0280319"/>
<dbReference type="dictyBase" id="DDB_G0280319">
    <property type="gene designation" value="glud2"/>
</dbReference>
<dbReference type="VEuPathDB" id="AmoebaDB:DDB_G0280319"/>
<dbReference type="eggNOG" id="KOG2250">
    <property type="taxonomic scope" value="Eukaryota"/>
</dbReference>
<dbReference type="HOGENOM" id="CLU_005220_0_0_1"/>
<dbReference type="InParanoid" id="Q54VI3"/>
<dbReference type="OMA" id="DEYGMTS"/>
<dbReference type="PhylomeDB" id="Q54VI3"/>
<dbReference type="PRO" id="PR:Q54VI3"/>
<dbReference type="Proteomes" id="UP000002195">
    <property type="component" value="Chromosome 3"/>
</dbReference>
<dbReference type="GO" id="GO:0005739">
    <property type="term" value="C:mitochondrion"/>
    <property type="evidence" value="ECO:0000318"/>
    <property type="project" value="GO_Central"/>
</dbReference>
<dbReference type="GO" id="GO:0004352">
    <property type="term" value="F:glutamate dehydrogenase (NAD+) activity"/>
    <property type="evidence" value="ECO:0000318"/>
    <property type="project" value="GO_Central"/>
</dbReference>
<dbReference type="GO" id="GO:0006538">
    <property type="term" value="P:glutamate catabolic process"/>
    <property type="evidence" value="ECO:0000318"/>
    <property type="project" value="GO_Central"/>
</dbReference>
<dbReference type="Gene3D" id="3.40.50.720">
    <property type="entry name" value="NAD(P)-binding Rossmann-like Domain"/>
    <property type="match status" value="1"/>
</dbReference>
<dbReference type="InterPro" id="IPR046346">
    <property type="entry name" value="Aminoacid_DH-like_N_sf"/>
</dbReference>
<dbReference type="InterPro" id="IPR006096">
    <property type="entry name" value="Glu/Leu/Phe/Val/Trp_DH_C"/>
</dbReference>
<dbReference type="InterPro" id="IPR036291">
    <property type="entry name" value="NAD(P)-bd_dom_sf"/>
</dbReference>
<dbReference type="InterPro" id="IPR056365">
    <property type="entry name" value="NAD-GDH_2nd"/>
</dbReference>
<dbReference type="InterPro" id="IPR016210">
    <property type="entry name" value="NAD-GDH_euk"/>
</dbReference>
<dbReference type="InterPro" id="IPR055480">
    <property type="entry name" value="NAD-GDH_N"/>
</dbReference>
<dbReference type="PANTHER" id="PTHR11606">
    <property type="entry name" value="GLUTAMATE DEHYDROGENASE"/>
    <property type="match status" value="1"/>
</dbReference>
<dbReference type="PANTHER" id="PTHR11606:SF24">
    <property type="entry name" value="NAD-SPECIFIC GLUTAMATE DEHYDROGENASE"/>
    <property type="match status" value="1"/>
</dbReference>
<dbReference type="Pfam" id="PF00208">
    <property type="entry name" value="ELFV_dehydrog"/>
    <property type="match status" value="1"/>
</dbReference>
<dbReference type="Pfam" id="PF23147">
    <property type="entry name" value="GDH2_N"/>
    <property type="match status" value="1"/>
</dbReference>
<dbReference type="Pfam" id="PF23152">
    <property type="entry name" value="GDH_2nd"/>
    <property type="match status" value="1"/>
</dbReference>
<dbReference type="PIRSF" id="PIRSF000184">
    <property type="entry name" value="GDH_NAD"/>
    <property type="match status" value="1"/>
</dbReference>
<dbReference type="SMART" id="SM00839">
    <property type="entry name" value="ELFV_dehydrog"/>
    <property type="match status" value="1"/>
</dbReference>
<dbReference type="SUPFAM" id="SSF53223">
    <property type="entry name" value="Aminoacid dehydrogenase-like, N-terminal domain"/>
    <property type="match status" value="1"/>
</dbReference>
<dbReference type="SUPFAM" id="SSF51735">
    <property type="entry name" value="NAD(P)-binding Rossmann-fold domains"/>
    <property type="match status" value="1"/>
</dbReference>
<name>GLUD2_DICDI</name>
<protein>
    <recommendedName>
        <fullName>Glutamate dehydrogenase 2</fullName>
        <ecNumber evidence="3 4">1.4.1.2</ecNumber>
    </recommendedName>
    <alternativeName>
        <fullName>NAD-specific glutamate dehydrogenase</fullName>
        <shortName>NAD-GDH</shortName>
    </alternativeName>
</protein>
<accession>Q54VI3</accession>
<comment type="catalytic activity">
    <reaction evidence="3 4">
        <text>L-glutamate + NAD(+) + H2O = 2-oxoglutarate + NH4(+) + NADH + H(+)</text>
        <dbReference type="Rhea" id="RHEA:15133"/>
        <dbReference type="ChEBI" id="CHEBI:15377"/>
        <dbReference type="ChEBI" id="CHEBI:15378"/>
        <dbReference type="ChEBI" id="CHEBI:16810"/>
        <dbReference type="ChEBI" id="CHEBI:28938"/>
        <dbReference type="ChEBI" id="CHEBI:29985"/>
        <dbReference type="ChEBI" id="CHEBI:57540"/>
        <dbReference type="ChEBI" id="CHEBI:57945"/>
        <dbReference type="EC" id="1.4.1.2"/>
    </reaction>
</comment>
<comment type="activity regulation">
    <text evidence="2 3 5">Activity is stimulated by AMP.</text>
</comment>
<comment type="activity regulation">
    <text evidence="4">(Microbial infection) Inhibited by ADP-ribosylation.</text>
</comment>
<comment type="biophysicochemical properties">
    <kinetics>
        <KM evidence="4">18.53 mM for glutamate</KM>
        <KM evidence="3 5">0.36 mM for alpha-ketoglutarate</KM>
        <KM evidence="3 5">16 uM for NADH</KM>
        <KM evidence="3 5">35.4 mM for ammonium ions</KM>
    </kinetics>
    <phDependence>
        <text evidence="3 5">Optimum pH is 7.25-7.5.</text>
    </phDependence>
</comment>
<comment type="subunit">
    <text evidence="4">Homodimer.</text>
</comment>
<comment type="subcellular location">
    <subcellularLocation>
        <location evidence="1">Cytoplasm</location>
    </subcellularLocation>
</comment>
<comment type="PTM">
    <text evidence="4">(Microbial infection) ADP-ribosylated at Arg-763 by the Legionella pneumophila effector Lart1, which inhibits the glutamate dehydrogenase activity. Amoeba are natural hosts of Legionella, and ADP-ribosylation by Lart1 may promote Legionella parasitism.</text>
</comment>
<comment type="similarity">
    <text evidence="6">Belongs to the Glu/Leu/Phe/Val dehydrogenases family.</text>
</comment>